<name>ILVD_SACI7</name>
<evidence type="ECO:0000255" key="1">
    <source>
        <dbReference type="HAMAP-Rule" id="MF_00012"/>
    </source>
</evidence>
<sequence length="558" mass="59422">MPAKLNSPSRYHGIYNAPHRAFLRSVGLTDEEIGKPLVAIATAWSEAGPCNFHTLALARVAKEGTKEAGLSPLAFPTMVVNDNIGMGSEGMRYSLVSRDLIADMVEAQFNAHAFDGLVGIGGCDKTTPGILMAMARLNVPSIYIYGGSAEPGYFMGKRLTIEDVHEAIGAYLAKRITENELYEIEKRAHPTLGTCSGLFTANTMGSMSEALGMALPGSASPTATSSRRVMYVKETGKALGSLIENGIKSREILTFEAFENAITTLMAMGGSTNAVLHLLAIAYEAGVKLTLDDFNRISKRTPYIASMKPGGDYVMADLDEVGGVPVVLKKLLDAGLLHGDVLTVTGKTMKQNLEQYKYPNVPHSHIVRDVKNPIKPRGGIVILKGSLAPEGAVIKVAATNVVKFEGKAKVYNSEDDAFKGVQSGEVSEGEVVIIRYEGPKGAPGMPEMLRVTAAIMGAGLNNVALVTDGRFSGATRGPMVGHVAPEAMVGGPIAIVEDGDTIVIDVESERLDLKLSEEEIKNRLKRWSPPSPRYKSGLLAKYASLVSQASMGAVTRPA</sequence>
<reference key="1">
    <citation type="journal article" date="2009" name="Proc. Natl. Acad. Sci. U.S.A.">
        <title>Biogeography of the Sulfolobus islandicus pan-genome.</title>
        <authorList>
            <person name="Reno M.L."/>
            <person name="Held N.L."/>
            <person name="Fields C.J."/>
            <person name="Burke P.V."/>
            <person name="Whitaker R.J."/>
        </authorList>
    </citation>
    <scope>NUCLEOTIDE SEQUENCE [LARGE SCALE GENOMIC DNA]</scope>
    <source>
        <strain>Y.G.57.14 / Yellowstone #1</strain>
    </source>
</reference>
<feature type="chain" id="PRO_1000201788" description="Dihydroxy-acid dehydratase">
    <location>
        <begin position="1"/>
        <end position="558"/>
    </location>
</feature>
<feature type="active site" description="Proton acceptor" evidence="1">
    <location>
        <position position="472"/>
    </location>
</feature>
<feature type="binding site" evidence="1">
    <location>
        <position position="50"/>
    </location>
    <ligand>
        <name>[2Fe-2S] cluster</name>
        <dbReference type="ChEBI" id="CHEBI:190135"/>
    </ligand>
</feature>
<feature type="binding site" evidence="1">
    <location>
        <position position="82"/>
    </location>
    <ligand>
        <name>Mg(2+)</name>
        <dbReference type="ChEBI" id="CHEBI:18420"/>
    </ligand>
</feature>
<feature type="binding site" evidence="1">
    <location>
        <position position="123"/>
    </location>
    <ligand>
        <name>[2Fe-2S] cluster</name>
        <dbReference type="ChEBI" id="CHEBI:190135"/>
    </ligand>
</feature>
<feature type="binding site" evidence="1">
    <location>
        <position position="124"/>
    </location>
    <ligand>
        <name>Mg(2+)</name>
        <dbReference type="ChEBI" id="CHEBI:18420"/>
    </ligand>
</feature>
<feature type="binding site" description="via carbamate group" evidence="1">
    <location>
        <position position="125"/>
    </location>
    <ligand>
        <name>Mg(2+)</name>
        <dbReference type="ChEBI" id="CHEBI:18420"/>
    </ligand>
</feature>
<feature type="binding site" evidence="1">
    <location>
        <position position="195"/>
    </location>
    <ligand>
        <name>[2Fe-2S] cluster</name>
        <dbReference type="ChEBI" id="CHEBI:190135"/>
    </ligand>
</feature>
<feature type="binding site" evidence="1">
    <location>
        <position position="447"/>
    </location>
    <ligand>
        <name>Mg(2+)</name>
        <dbReference type="ChEBI" id="CHEBI:18420"/>
    </ligand>
</feature>
<feature type="modified residue" description="N6-carboxylysine" evidence="1">
    <location>
        <position position="125"/>
    </location>
</feature>
<accession>C3N9R7</accession>
<comment type="function">
    <text evidence="1">Functions in the biosynthesis of branched-chain amino acids. Catalyzes the dehydration of (2R,3R)-2,3-dihydroxy-3-methylpentanoate (2,3-dihydroxy-3-methylvalerate) into 2-oxo-3-methylpentanoate (2-oxo-3-methylvalerate) and of (2R)-2,3-dihydroxy-3-methylbutanoate (2,3-dihydroxyisovalerate) into 2-oxo-3-methylbutanoate (2-oxoisovalerate), the penultimate precursor to L-isoleucine and L-valine, respectively.</text>
</comment>
<comment type="catalytic activity">
    <reaction evidence="1">
        <text>(2R)-2,3-dihydroxy-3-methylbutanoate = 3-methyl-2-oxobutanoate + H2O</text>
        <dbReference type="Rhea" id="RHEA:24809"/>
        <dbReference type="ChEBI" id="CHEBI:11851"/>
        <dbReference type="ChEBI" id="CHEBI:15377"/>
        <dbReference type="ChEBI" id="CHEBI:49072"/>
        <dbReference type="EC" id="4.2.1.9"/>
    </reaction>
    <physiologicalReaction direction="left-to-right" evidence="1">
        <dbReference type="Rhea" id="RHEA:24810"/>
    </physiologicalReaction>
</comment>
<comment type="catalytic activity">
    <reaction evidence="1">
        <text>(2R,3R)-2,3-dihydroxy-3-methylpentanoate = (S)-3-methyl-2-oxopentanoate + H2O</text>
        <dbReference type="Rhea" id="RHEA:27694"/>
        <dbReference type="ChEBI" id="CHEBI:15377"/>
        <dbReference type="ChEBI" id="CHEBI:35146"/>
        <dbReference type="ChEBI" id="CHEBI:49258"/>
        <dbReference type="EC" id="4.2.1.9"/>
    </reaction>
    <physiologicalReaction direction="left-to-right" evidence="1">
        <dbReference type="Rhea" id="RHEA:27695"/>
    </physiologicalReaction>
</comment>
<comment type="cofactor">
    <cofactor evidence="1">
        <name>[2Fe-2S] cluster</name>
        <dbReference type="ChEBI" id="CHEBI:190135"/>
    </cofactor>
    <text evidence="1">Binds 1 [2Fe-2S] cluster per subunit. This cluster acts as a Lewis acid cofactor.</text>
</comment>
<comment type="cofactor">
    <cofactor evidence="1">
        <name>Mg(2+)</name>
        <dbReference type="ChEBI" id="CHEBI:18420"/>
    </cofactor>
</comment>
<comment type="pathway">
    <text evidence="1">Amino-acid biosynthesis; L-isoleucine biosynthesis; L-isoleucine from 2-oxobutanoate: step 3/4.</text>
</comment>
<comment type="pathway">
    <text evidence="1">Amino-acid biosynthesis; L-valine biosynthesis; L-valine from pyruvate: step 3/4.</text>
</comment>
<comment type="subunit">
    <text evidence="1">Homodimer.</text>
</comment>
<comment type="similarity">
    <text evidence="1">Belongs to the IlvD/Edd family.</text>
</comment>
<protein>
    <recommendedName>
        <fullName evidence="1">Dihydroxy-acid dehydratase</fullName>
        <shortName evidence="1">DAD</shortName>
        <ecNumber evidence="1">4.2.1.9</ecNumber>
    </recommendedName>
</protein>
<dbReference type="EC" id="4.2.1.9" evidence="1"/>
<dbReference type="EMBL" id="CP001403">
    <property type="protein sequence ID" value="ACP46639.1"/>
    <property type="molecule type" value="Genomic_DNA"/>
</dbReference>
<dbReference type="RefSeq" id="WP_009990927.1">
    <property type="nucleotide sequence ID" value="NC_012622.1"/>
</dbReference>
<dbReference type="SMR" id="C3N9R7"/>
<dbReference type="GeneID" id="7810155"/>
<dbReference type="KEGG" id="siy:YG5714_2395"/>
<dbReference type="HOGENOM" id="CLU_014271_4_2_2"/>
<dbReference type="UniPathway" id="UPA00047">
    <property type="reaction ID" value="UER00057"/>
</dbReference>
<dbReference type="UniPathway" id="UPA00049">
    <property type="reaction ID" value="UER00061"/>
</dbReference>
<dbReference type="Proteomes" id="UP000002308">
    <property type="component" value="Chromosome"/>
</dbReference>
<dbReference type="GO" id="GO:0051537">
    <property type="term" value="F:2 iron, 2 sulfur cluster binding"/>
    <property type="evidence" value="ECO:0007669"/>
    <property type="project" value="UniProtKB-UniRule"/>
</dbReference>
<dbReference type="GO" id="GO:0004160">
    <property type="term" value="F:dihydroxy-acid dehydratase activity"/>
    <property type="evidence" value="ECO:0007669"/>
    <property type="project" value="UniProtKB-UniRule"/>
</dbReference>
<dbReference type="GO" id="GO:0000287">
    <property type="term" value="F:magnesium ion binding"/>
    <property type="evidence" value="ECO:0007669"/>
    <property type="project" value="UniProtKB-UniRule"/>
</dbReference>
<dbReference type="GO" id="GO:0009097">
    <property type="term" value="P:isoleucine biosynthetic process"/>
    <property type="evidence" value="ECO:0007669"/>
    <property type="project" value="UniProtKB-UniRule"/>
</dbReference>
<dbReference type="GO" id="GO:0009099">
    <property type="term" value="P:L-valine biosynthetic process"/>
    <property type="evidence" value="ECO:0007669"/>
    <property type="project" value="UniProtKB-UniRule"/>
</dbReference>
<dbReference type="FunFam" id="3.50.30.80:FF:000001">
    <property type="entry name" value="Dihydroxy-acid dehydratase"/>
    <property type="match status" value="1"/>
</dbReference>
<dbReference type="Gene3D" id="3.50.30.80">
    <property type="entry name" value="IlvD/EDD C-terminal domain-like"/>
    <property type="match status" value="1"/>
</dbReference>
<dbReference type="HAMAP" id="MF_00012">
    <property type="entry name" value="IlvD"/>
    <property type="match status" value="1"/>
</dbReference>
<dbReference type="InterPro" id="IPR050165">
    <property type="entry name" value="DHAD_IlvD/Edd"/>
</dbReference>
<dbReference type="InterPro" id="IPR042096">
    <property type="entry name" value="Dihydro-acid_dehy_C"/>
</dbReference>
<dbReference type="InterPro" id="IPR004404">
    <property type="entry name" value="DihydroxyA_deHydtase"/>
</dbReference>
<dbReference type="InterPro" id="IPR020558">
    <property type="entry name" value="DiOHA_6PGluconate_deHydtase_CS"/>
</dbReference>
<dbReference type="InterPro" id="IPR056740">
    <property type="entry name" value="ILV_EDD_C"/>
</dbReference>
<dbReference type="InterPro" id="IPR000581">
    <property type="entry name" value="ILV_EDD_N"/>
</dbReference>
<dbReference type="InterPro" id="IPR037237">
    <property type="entry name" value="IlvD/EDD_N"/>
</dbReference>
<dbReference type="NCBIfam" id="TIGR00110">
    <property type="entry name" value="ilvD"/>
    <property type="match status" value="1"/>
</dbReference>
<dbReference type="NCBIfam" id="NF002068">
    <property type="entry name" value="PRK00911.1"/>
    <property type="match status" value="1"/>
</dbReference>
<dbReference type="PANTHER" id="PTHR21000">
    <property type="entry name" value="DIHYDROXY-ACID DEHYDRATASE DAD"/>
    <property type="match status" value="1"/>
</dbReference>
<dbReference type="PANTHER" id="PTHR21000:SF5">
    <property type="entry name" value="DIHYDROXY-ACID DEHYDRATASE, MITOCHONDRIAL"/>
    <property type="match status" value="1"/>
</dbReference>
<dbReference type="Pfam" id="PF24877">
    <property type="entry name" value="ILV_EDD_C"/>
    <property type="match status" value="1"/>
</dbReference>
<dbReference type="Pfam" id="PF00920">
    <property type="entry name" value="ILVD_EDD_N"/>
    <property type="match status" value="1"/>
</dbReference>
<dbReference type="SUPFAM" id="SSF143975">
    <property type="entry name" value="IlvD/EDD N-terminal domain-like"/>
    <property type="match status" value="1"/>
</dbReference>
<dbReference type="SUPFAM" id="SSF52016">
    <property type="entry name" value="LeuD/IlvD-like"/>
    <property type="match status" value="1"/>
</dbReference>
<dbReference type="PROSITE" id="PS00886">
    <property type="entry name" value="ILVD_EDD_1"/>
    <property type="match status" value="1"/>
</dbReference>
<dbReference type="PROSITE" id="PS00887">
    <property type="entry name" value="ILVD_EDD_2"/>
    <property type="match status" value="1"/>
</dbReference>
<keyword id="KW-0001">2Fe-2S</keyword>
<keyword id="KW-0028">Amino-acid biosynthesis</keyword>
<keyword id="KW-0100">Branched-chain amino acid biosynthesis</keyword>
<keyword id="KW-0408">Iron</keyword>
<keyword id="KW-0411">Iron-sulfur</keyword>
<keyword id="KW-0456">Lyase</keyword>
<keyword id="KW-0460">Magnesium</keyword>
<keyword id="KW-0479">Metal-binding</keyword>
<proteinExistence type="inferred from homology"/>
<gene>
    <name evidence="1" type="primary">ilvD</name>
    <name type="ordered locus">YG5714_2395</name>
</gene>
<organism>
    <name type="scientific">Saccharolobus islandicus (strain Y.G.57.14 / Yellowstone #1)</name>
    <name type="common">Sulfolobus islandicus</name>
    <dbReference type="NCBI Taxonomy" id="439386"/>
    <lineage>
        <taxon>Archaea</taxon>
        <taxon>Thermoproteota</taxon>
        <taxon>Thermoprotei</taxon>
        <taxon>Sulfolobales</taxon>
        <taxon>Sulfolobaceae</taxon>
        <taxon>Saccharolobus</taxon>
    </lineage>
</organism>